<keyword id="KW-1185">Reference proteome</keyword>
<proteinExistence type="inferred from homology"/>
<organism>
    <name type="scientific">Mycoplasma pneumoniae (strain ATCC 29342 / M129 / Subtype 1)</name>
    <name type="common">Mycoplasmoides pneumoniae</name>
    <dbReference type="NCBI Taxonomy" id="272634"/>
    <lineage>
        <taxon>Bacteria</taxon>
        <taxon>Bacillati</taxon>
        <taxon>Mycoplasmatota</taxon>
        <taxon>Mycoplasmoidales</taxon>
        <taxon>Mycoplasmoidaceae</taxon>
        <taxon>Mycoplasmoides</taxon>
    </lineage>
</organism>
<accession>P75413</accession>
<sequence length="180" mass="21073">MKEKIPFYNEKEFHYMMKKTKKGTFSGWYIINPENNSVEFSGSFNRQFKLNKPVIPVNTEYVTRKEFNEYKDSNDQRLTKIENKVDKLEIKVDKLEKKVDKLEVKVDKLVETVNAQGEDLNNFKVEVRGTLQSQGETLQLILQTLQGMSKRLDSVEGRLDSMDGRLDSMETRLDKIDPLK</sequence>
<protein>
    <recommendedName>
        <fullName>UPF0134 protein MPN_368</fullName>
    </recommendedName>
</protein>
<feature type="chain" id="PRO_0000221607" description="UPF0134 protein MPN_368">
    <location>
        <begin position="1"/>
        <end position="180"/>
    </location>
</feature>
<comment type="similarity">
    <text evidence="1">Belongs to the UPF0134 family.</text>
</comment>
<gene>
    <name type="ordered locus">MPN_368</name>
    <name type="ORF">H91_orf180</name>
    <name type="ORF">MP468</name>
</gene>
<dbReference type="EMBL" id="U00089">
    <property type="protein sequence ID" value="AAB96116.1"/>
    <property type="molecule type" value="Genomic_DNA"/>
</dbReference>
<dbReference type="PIR" id="S73794">
    <property type="entry name" value="S73794"/>
</dbReference>
<dbReference type="RefSeq" id="NP_110056.1">
    <property type="nucleotide sequence ID" value="NC_000912.1"/>
</dbReference>
<dbReference type="RefSeq" id="WP_010874724.1">
    <property type="nucleotide sequence ID" value="NZ_OU342337.1"/>
</dbReference>
<dbReference type="SMR" id="P75413"/>
<dbReference type="STRING" id="272634.MPN_368"/>
<dbReference type="EnsemblBacteria" id="AAB96116">
    <property type="protein sequence ID" value="AAB96116"/>
    <property type="gene ID" value="MPN_368"/>
</dbReference>
<dbReference type="KEGG" id="mpn:MPN_368"/>
<dbReference type="PATRIC" id="fig|272634.6.peg.397"/>
<dbReference type="HOGENOM" id="CLU_137918_0_0_14"/>
<dbReference type="BioCyc" id="MPNE272634:G1GJ3-579-MONOMER"/>
<dbReference type="Proteomes" id="UP000000808">
    <property type="component" value="Chromosome"/>
</dbReference>
<dbReference type="Gene3D" id="1.20.5.110">
    <property type="match status" value="1"/>
</dbReference>
<dbReference type="Gene3D" id="1.20.5.170">
    <property type="match status" value="1"/>
</dbReference>
<dbReference type="InterPro" id="IPR002862">
    <property type="entry name" value="DUF16"/>
</dbReference>
<dbReference type="Pfam" id="PF01519">
    <property type="entry name" value="DUF16"/>
    <property type="match status" value="1"/>
</dbReference>
<dbReference type="SUPFAM" id="SSF144266">
    <property type="entry name" value="MPN010-like"/>
    <property type="match status" value="1"/>
</dbReference>
<evidence type="ECO:0000305" key="1"/>
<reference key="1">
    <citation type="journal article" date="1996" name="Nucleic Acids Res.">
        <title>Complete sequence analysis of the genome of the bacterium Mycoplasma pneumoniae.</title>
        <authorList>
            <person name="Himmelreich R."/>
            <person name="Hilbert H."/>
            <person name="Plagens H."/>
            <person name="Pirkl E."/>
            <person name="Li B.-C."/>
            <person name="Herrmann R."/>
        </authorList>
    </citation>
    <scope>NUCLEOTIDE SEQUENCE [LARGE SCALE GENOMIC DNA]</scope>
    <source>
        <strain>ATCC 29342 / M129 / Subtype 1</strain>
    </source>
</reference>
<name>Y368_MYCPN</name>